<keyword id="KW-0113">Calvin cycle</keyword>
<keyword id="KW-0120">Carbon dioxide fixation</keyword>
<keyword id="KW-0150">Chloroplast</keyword>
<keyword id="KW-0601">Photorespiration</keyword>
<keyword id="KW-0602">Photosynthesis</keyword>
<keyword id="KW-0934">Plastid</keyword>
<sequence length="139" mass="16131">MKLTQGAFSFLPDLTDAQVTKQIQYALNKSWAISIEYTDDPHPRNSYWEMWGLPLFDVKDPAAILFEINMARKAKPNYYLKIACFDNTRGIESCVLSFIVQRPSYEPGFKMTRQEVKGRQLVYTLESYSVDAKPEGERY</sequence>
<evidence type="ECO:0000255" key="1">
    <source>
        <dbReference type="HAMAP-Rule" id="MF_00859"/>
    </source>
</evidence>
<organism>
    <name type="scientific">Chrysotila carterae</name>
    <name type="common">Marine alga</name>
    <name type="synonym">Syracosphaera carterae</name>
    <dbReference type="NCBI Taxonomy" id="13221"/>
    <lineage>
        <taxon>Eukaryota</taxon>
        <taxon>Haptista</taxon>
        <taxon>Haptophyta</taxon>
        <taxon>Prymnesiophyceae</taxon>
        <taxon>Isochrysidales</taxon>
        <taxon>Isochrysidaceae</taxon>
        <taxon>Chrysotila</taxon>
    </lineage>
</organism>
<accession>Q08052</accession>
<protein>
    <recommendedName>
        <fullName evidence="1">Ribulose bisphosphate carboxylase small subunit</fullName>
        <shortName evidence="1">RuBisCO small subunit</shortName>
    </recommendedName>
</protein>
<feature type="chain" id="PRO_0000198602" description="Ribulose bisphosphate carboxylase small subunit">
    <location>
        <begin position="1"/>
        <end position="139"/>
    </location>
</feature>
<proteinExistence type="inferred from homology"/>
<reference key="1">
    <citation type="journal article" date="1993" name="J. Phycol.">
        <title>Structure and cotranscription of the plastid-encoded rbcL and rbcS genes of Pleurochrysis carterae (prymnesiophyta).</title>
        <authorList>
            <person name="Fujiwara S."/>
            <person name="Iwahashi H."/>
            <person name="Someya J."/>
            <person name="Nishikawa S."/>
            <person name="Minaka N."/>
        </authorList>
    </citation>
    <scope>NUCLEOTIDE SEQUENCE [GENOMIC DNA]</scope>
</reference>
<comment type="function">
    <text evidence="1">RuBisCO catalyzes two reactions: the carboxylation of D-ribulose 1,5-bisphosphate, the primary event in carbon dioxide fixation, as well as the oxidative fragmentation of the pentose substrate in the photorespiration process. Both reactions occur simultaneously and in competition at the same active site. Although the small subunit is not catalytic it is essential for maximal activity.</text>
</comment>
<comment type="subunit">
    <text evidence="1">Heterohexadecamer of 8 large and 8 small subunits.</text>
</comment>
<comment type="subcellular location">
    <subcellularLocation>
        <location evidence="1">Plastid</location>
        <location evidence="1">Chloroplast</location>
    </subcellularLocation>
</comment>
<comment type="miscellaneous">
    <text>In this alga, in contrast to plants, the small subunit is encoded in the chloroplast.</text>
</comment>
<comment type="miscellaneous">
    <text evidence="1">The basic functional RuBisCO is composed of a large chain homodimer in a 'head-to-tail' conformation. In form I RuBisCO this homodimer is arranged in a barrel-like tetramer with the small subunits forming a tetrameric 'cap' on each end of the 'barrel'.</text>
</comment>
<comment type="similarity">
    <text evidence="1">Belongs to the RuBisCO small chain family.</text>
</comment>
<name>RBS_CHRCT</name>
<gene>
    <name evidence="1" type="primary">rbcS</name>
</gene>
<dbReference type="EMBL" id="D11140">
    <property type="protein sequence ID" value="BAA01915.1"/>
    <property type="molecule type" value="Genomic_DNA"/>
</dbReference>
<dbReference type="SMR" id="Q08052"/>
<dbReference type="GO" id="GO:0009507">
    <property type="term" value="C:chloroplast"/>
    <property type="evidence" value="ECO:0007669"/>
    <property type="project" value="UniProtKB-SubCell"/>
</dbReference>
<dbReference type="GO" id="GO:0016984">
    <property type="term" value="F:ribulose-bisphosphate carboxylase activity"/>
    <property type="evidence" value="ECO:0007669"/>
    <property type="project" value="UniProtKB-UniRule"/>
</dbReference>
<dbReference type="GO" id="GO:0019253">
    <property type="term" value="P:reductive pentose-phosphate cycle"/>
    <property type="evidence" value="ECO:0007669"/>
    <property type="project" value="UniProtKB-UniRule"/>
</dbReference>
<dbReference type="CDD" id="cd03527">
    <property type="entry name" value="RuBisCO_small"/>
    <property type="match status" value="1"/>
</dbReference>
<dbReference type="Gene3D" id="3.30.190.10">
    <property type="entry name" value="Ribulose bisphosphate carboxylase, small subunit"/>
    <property type="match status" value="1"/>
</dbReference>
<dbReference type="HAMAP" id="MF_00859">
    <property type="entry name" value="RuBisCO_S_bact"/>
    <property type="match status" value="1"/>
</dbReference>
<dbReference type="InterPro" id="IPR024681">
    <property type="entry name" value="RuBisCO_ssu"/>
</dbReference>
<dbReference type="InterPro" id="IPR000894">
    <property type="entry name" value="RuBisCO_ssu_dom"/>
</dbReference>
<dbReference type="InterPro" id="IPR036385">
    <property type="entry name" value="RuBisCO_ssu_sf"/>
</dbReference>
<dbReference type="PANTHER" id="PTHR31262">
    <property type="entry name" value="RIBULOSE BISPHOSPHATE CARBOXYLASE SMALL CHAIN 1, CHLOROPLASTIC"/>
    <property type="match status" value="1"/>
</dbReference>
<dbReference type="PANTHER" id="PTHR31262:SF23">
    <property type="entry name" value="RIBULOSE BISPHOSPHATE CARBOXYLASE SMALL SUBUNIT"/>
    <property type="match status" value="1"/>
</dbReference>
<dbReference type="Pfam" id="PF00101">
    <property type="entry name" value="RuBisCO_small"/>
    <property type="match status" value="1"/>
</dbReference>
<dbReference type="SMART" id="SM00961">
    <property type="entry name" value="RuBisCO_small"/>
    <property type="match status" value="1"/>
</dbReference>
<dbReference type="SUPFAM" id="SSF55239">
    <property type="entry name" value="RuBisCO, small subunit"/>
    <property type="match status" value="1"/>
</dbReference>
<geneLocation type="chloroplast"/>